<proteinExistence type="evidence at transcript level"/>
<gene>
    <name type="primary">gja2</name>
</gene>
<name>CXA2_XENLA</name>
<comment type="function">
    <text>One gap junction consists of a cluster of closely packed pairs of transmembrane channels, the connexons, through which materials of low MW diffuse from one cell to a neighboring cell.</text>
</comment>
<comment type="subunit">
    <text>A connexon is composed of a hexamer of connexins.</text>
</comment>
<comment type="subcellular location">
    <subcellularLocation>
        <location>Cell membrane</location>
        <topology>Multi-pass membrane protein</topology>
    </subcellularLocation>
    <subcellularLocation>
        <location>Cell junction</location>
        <location>Gap junction</location>
    </subcellularLocation>
</comment>
<comment type="tissue specificity">
    <text>Resides primarily in the ovary, oocytes and early embryos.</text>
</comment>
<comment type="developmental stage">
    <text>It is a maternal protein that disappears by the late gastrula stage.</text>
</comment>
<comment type="similarity">
    <text evidence="2">Belongs to the connexin family. Alpha-type (group II) subfamily.</text>
</comment>
<reference key="1">
    <citation type="journal article" date="1990" name="J. Cell Biol.">
        <title>Differential regulation of the levels of three gap junction mRNAs in Xenopus embryos.</title>
        <authorList>
            <person name="Gimlich R.L."/>
            <person name="Kumar N.M."/>
            <person name="Gilula N.B."/>
        </authorList>
    </citation>
    <scope>NUCLEOTIDE SEQUENCE [MRNA]</scope>
    <source>
        <tissue>Ovary</tissue>
    </source>
</reference>
<reference key="2">
    <citation type="journal article" date="1989" name="Science">
        <title>Cloning and expression of a Xenopus embryonic gap junction protein.</title>
        <authorList>
            <person name="Ebihara L."/>
            <person name="Beyer E.C."/>
            <person name="Swenson K.I."/>
            <person name="Paul D.L."/>
            <person name="Goodenough D.A."/>
        </authorList>
    </citation>
    <scope>NUCLEOTIDE SEQUENCE [MRNA]</scope>
</reference>
<accession>P16864</accession>
<keyword id="KW-0965">Cell junction</keyword>
<keyword id="KW-1003">Cell membrane</keyword>
<keyword id="KW-0303">Gap junction</keyword>
<keyword id="KW-0472">Membrane</keyword>
<keyword id="KW-1185">Reference proteome</keyword>
<keyword id="KW-0812">Transmembrane</keyword>
<keyword id="KW-1133">Transmembrane helix</keyword>
<evidence type="ECO:0000255" key="1"/>
<evidence type="ECO:0000305" key="2"/>
<feature type="chain" id="PRO_0000057808" description="Gap junction alpha-2 protein">
    <location>
        <begin position="1"/>
        <end position="334"/>
    </location>
</feature>
<feature type="topological domain" description="Cytoplasmic" evidence="1">
    <location>
        <begin position="1"/>
        <end position="12"/>
    </location>
</feature>
<feature type="transmembrane region" description="Helical" evidence="1">
    <location>
        <begin position="13"/>
        <end position="35"/>
    </location>
</feature>
<feature type="topological domain" description="Extracellular" evidence="1">
    <location>
        <begin position="36"/>
        <end position="75"/>
    </location>
</feature>
<feature type="transmembrane region" description="Helical" evidence="1">
    <location>
        <begin position="76"/>
        <end position="98"/>
    </location>
</feature>
<feature type="topological domain" description="Cytoplasmic" evidence="1">
    <location>
        <begin position="99"/>
        <end position="153"/>
    </location>
</feature>
<feature type="transmembrane region" description="Helical" evidence="1">
    <location>
        <begin position="154"/>
        <end position="176"/>
    </location>
</feature>
<feature type="topological domain" description="Extracellular" evidence="1">
    <location>
        <begin position="177"/>
        <end position="207"/>
    </location>
</feature>
<feature type="transmembrane region" description="Helical" evidence="1">
    <location>
        <begin position="208"/>
        <end position="230"/>
    </location>
</feature>
<feature type="topological domain" description="Cytoplasmic" evidence="1">
    <location>
        <begin position="231"/>
        <end position="334"/>
    </location>
</feature>
<feature type="sequence conflict" description="In Ref. 2; AAA49680." evidence="2" ref="2">
    <original>S</original>
    <variation>Y</variation>
    <location>
        <position position="73"/>
    </location>
</feature>
<feature type="sequence conflict" description="In Ref. 2; AAA49680." evidence="2" ref="2">
    <original>I</original>
    <variation>T</variation>
    <location>
        <position position="91"/>
    </location>
</feature>
<feature type="sequence conflict" description="In Ref. 2; AAA49680." evidence="2" ref="2">
    <original>H</original>
    <variation>Y</variation>
    <location>
        <position position="126"/>
    </location>
</feature>
<feature type="sequence conflict" description="In Ref. 2; AAA49680." evidence="2" ref="2">
    <original>S</original>
    <variation>P</variation>
    <location>
        <position position="235"/>
    </location>
</feature>
<feature type="sequence conflict" description="In Ref. 2; AAA49680." evidence="2" ref="2">
    <original>S</original>
    <variation>A</variation>
    <location>
        <position position="267"/>
    </location>
</feature>
<feature type="sequence conflict" description="In Ref. 2; AAA49680." evidence="2" ref="2">
    <original>R</original>
    <variation>S</variation>
    <location>
        <position position="279"/>
    </location>
</feature>
<feature type="sequence conflict" description="In Ref. 2; AAA49680." evidence="2" ref="2">
    <original>S</original>
    <variation>R</variation>
    <location>
        <position position="323"/>
    </location>
</feature>
<sequence>MAGWELLKLLLDDVQEHSTLIGKVWLTVLFIFRIFILSVAGESVWTDEQSDFICNTQQPGCTNVCYDQAFPISHVRYWVLQFLFVSTPTLIYLGHMVYLSKKEEKERQKENESRILVANEAQTEVHSSATKKIRIQGPLMCTYTTSVVFKSIFEAGFLLGQWYIYGFVMSPIFVCERIPCKHKVECFVSRPMEKTIFIIFMLVVSLISLLLNLMELIHLSFKCFQHGIKEGATCSPTGIPFNGAGNRMPPQEYTNPPSSNQDIDLPSYNKMSGGHNWSRIQMEQQVNGLVKPKCQCDCWSQSAISVVVSGAPGIISNMDAVKSNHQTSSKQQYV</sequence>
<organism>
    <name type="scientific">Xenopus laevis</name>
    <name type="common">African clawed frog</name>
    <dbReference type="NCBI Taxonomy" id="8355"/>
    <lineage>
        <taxon>Eukaryota</taxon>
        <taxon>Metazoa</taxon>
        <taxon>Chordata</taxon>
        <taxon>Craniata</taxon>
        <taxon>Vertebrata</taxon>
        <taxon>Euteleostomi</taxon>
        <taxon>Amphibia</taxon>
        <taxon>Batrachia</taxon>
        <taxon>Anura</taxon>
        <taxon>Pipoidea</taxon>
        <taxon>Pipidae</taxon>
        <taxon>Xenopodinae</taxon>
        <taxon>Xenopus</taxon>
        <taxon>Xenopus</taxon>
    </lineage>
</organism>
<protein>
    <recommendedName>
        <fullName>Gap junction alpha-2 protein</fullName>
    </recommendedName>
    <alternativeName>
        <fullName>Connexin-38</fullName>
        <shortName>Cx38</shortName>
    </alternativeName>
</protein>
<dbReference type="EMBL" id="X17242">
    <property type="protein sequence ID" value="CAA35107.1"/>
    <property type="molecule type" value="mRNA"/>
</dbReference>
<dbReference type="EMBL" id="J03091">
    <property type="protein sequence ID" value="AAA49680.1"/>
    <property type="molecule type" value="mRNA"/>
</dbReference>
<dbReference type="PIR" id="A40166">
    <property type="entry name" value="A40166"/>
</dbReference>
<dbReference type="PIR" id="B34575">
    <property type="entry name" value="B34575"/>
</dbReference>
<dbReference type="RefSeq" id="XP_018103585.1">
    <property type="nucleotide sequence ID" value="XM_018248096.1"/>
</dbReference>
<dbReference type="RefSeq" id="XP_018103586.1">
    <property type="nucleotide sequence ID" value="XM_018248097.1"/>
</dbReference>
<dbReference type="SMR" id="P16864"/>
<dbReference type="DNASU" id="397866"/>
<dbReference type="AGR" id="Xenbase:XB-GENE-22062680"/>
<dbReference type="Xenbase" id="XB-GENE-22062680">
    <property type="gene designation" value="gja4.2.S"/>
</dbReference>
<dbReference type="Proteomes" id="UP000186698">
    <property type="component" value="Unplaced"/>
</dbReference>
<dbReference type="Bgee" id="397866">
    <property type="expression patterns" value="Expressed in ovary and 5 other cell types or tissues"/>
</dbReference>
<dbReference type="GO" id="GO:0005922">
    <property type="term" value="C:connexin complex"/>
    <property type="evidence" value="ECO:0000318"/>
    <property type="project" value="GO_Central"/>
</dbReference>
<dbReference type="GO" id="GO:0005243">
    <property type="term" value="F:gap junction channel activity"/>
    <property type="evidence" value="ECO:0000318"/>
    <property type="project" value="GO_Central"/>
</dbReference>
<dbReference type="GO" id="GO:0007267">
    <property type="term" value="P:cell-cell signaling"/>
    <property type="evidence" value="ECO:0000318"/>
    <property type="project" value="GO_Central"/>
</dbReference>
<dbReference type="FunFam" id="1.20.1440.80:FF:000001">
    <property type="entry name" value="Gap junction alpha-1"/>
    <property type="match status" value="1"/>
</dbReference>
<dbReference type="Gene3D" id="1.20.1440.80">
    <property type="entry name" value="Gap junction channel protein cysteine-rich domain"/>
    <property type="match status" value="1"/>
</dbReference>
<dbReference type="InterPro" id="IPR000500">
    <property type="entry name" value="Connexin"/>
</dbReference>
<dbReference type="InterPro" id="IPR019570">
    <property type="entry name" value="Connexin_CCC"/>
</dbReference>
<dbReference type="InterPro" id="IPR017990">
    <property type="entry name" value="Connexin_CS"/>
</dbReference>
<dbReference type="InterPro" id="IPR013092">
    <property type="entry name" value="Connexin_N"/>
</dbReference>
<dbReference type="InterPro" id="IPR038359">
    <property type="entry name" value="Connexin_N_sf"/>
</dbReference>
<dbReference type="PANTHER" id="PTHR11984">
    <property type="entry name" value="CONNEXIN"/>
    <property type="match status" value="1"/>
</dbReference>
<dbReference type="PANTHER" id="PTHR11984:SF119">
    <property type="entry name" value="GAP JUNCTION ALPHA-2 PROTEIN"/>
    <property type="match status" value="1"/>
</dbReference>
<dbReference type="Pfam" id="PF00029">
    <property type="entry name" value="Connexin"/>
    <property type="match status" value="1"/>
</dbReference>
<dbReference type="PRINTS" id="PR00206">
    <property type="entry name" value="CONNEXIN"/>
</dbReference>
<dbReference type="SMART" id="SM00037">
    <property type="entry name" value="CNX"/>
    <property type="match status" value="1"/>
</dbReference>
<dbReference type="SMART" id="SM01089">
    <property type="entry name" value="Connexin_CCC"/>
    <property type="match status" value="1"/>
</dbReference>
<dbReference type="PROSITE" id="PS00407">
    <property type="entry name" value="CONNEXINS_1"/>
    <property type="match status" value="1"/>
</dbReference>
<dbReference type="PROSITE" id="PS00408">
    <property type="entry name" value="CONNEXINS_2"/>
    <property type="match status" value="1"/>
</dbReference>